<organism>
    <name type="scientific">Yersinia enterocolitica serotype O:8 / biotype 1B (strain NCTC 13174 / 8081)</name>
    <dbReference type="NCBI Taxonomy" id="393305"/>
    <lineage>
        <taxon>Bacteria</taxon>
        <taxon>Pseudomonadati</taxon>
        <taxon>Pseudomonadota</taxon>
        <taxon>Gammaproteobacteria</taxon>
        <taxon>Enterobacterales</taxon>
        <taxon>Yersiniaceae</taxon>
        <taxon>Yersinia</taxon>
    </lineage>
</organism>
<feature type="chain" id="PRO_1000013564" description="Ion-translocating oxidoreductase complex subunit A">
    <location>
        <begin position="1"/>
        <end position="193"/>
    </location>
</feature>
<feature type="transmembrane region" description="Helical" evidence="1">
    <location>
        <begin position="5"/>
        <end position="25"/>
    </location>
</feature>
<feature type="transmembrane region" description="Helical" evidence="1">
    <location>
        <begin position="39"/>
        <end position="59"/>
    </location>
</feature>
<feature type="transmembrane region" description="Helical" evidence="1">
    <location>
        <begin position="62"/>
        <end position="82"/>
    </location>
</feature>
<feature type="transmembrane region" description="Helical" evidence="1">
    <location>
        <begin position="102"/>
        <end position="122"/>
    </location>
</feature>
<feature type="transmembrane region" description="Helical" evidence="1">
    <location>
        <begin position="134"/>
        <end position="154"/>
    </location>
</feature>
<feature type="transmembrane region" description="Helical" evidence="1">
    <location>
        <begin position="171"/>
        <end position="191"/>
    </location>
</feature>
<protein>
    <recommendedName>
        <fullName evidence="1">Ion-translocating oxidoreductase complex subunit A</fullName>
        <ecNumber evidence="1">7.-.-.-</ecNumber>
    </recommendedName>
    <alternativeName>
        <fullName evidence="1">Rnf electron transport complex subunit A</fullName>
    </alternativeName>
</protein>
<reference key="1">
    <citation type="journal article" date="2006" name="PLoS Genet.">
        <title>The complete genome sequence and comparative genome analysis of the high pathogenicity Yersinia enterocolitica strain 8081.</title>
        <authorList>
            <person name="Thomson N.R."/>
            <person name="Howard S."/>
            <person name="Wren B.W."/>
            <person name="Holden M.T.G."/>
            <person name="Crossman L."/>
            <person name="Challis G.L."/>
            <person name="Churcher C."/>
            <person name="Mungall K."/>
            <person name="Brooks K."/>
            <person name="Chillingworth T."/>
            <person name="Feltwell T."/>
            <person name="Abdellah Z."/>
            <person name="Hauser H."/>
            <person name="Jagels K."/>
            <person name="Maddison M."/>
            <person name="Moule S."/>
            <person name="Sanders M."/>
            <person name="Whitehead S."/>
            <person name="Quail M.A."/>
            <person name="Dougan G."/>
            <person name="Parkhill J."/>
            <person name="Prentice M.B."/>
        </authorList>
    </citation>
    <scope>NUCLEOTIDE SEQUENCE [LARGE SCALE GENOMIC DNA]</scope>
    <source>
        <strain>NCTC 13174 / 8081</strain>
    </source>
</reference>
<name>RNFA_YERE8</name>
<sequence length="193" mass="20752">MTEYLLLFVGTVLVNNFVLVKFLGLCPFMGVSKKLETAIGMGLATTFVLTLASVCAWMVNSFILLPLGLVYLRTLAFILVIAVVVQFTELVVRKTSPALYRLLGIFLPLITTNCAVLGVALLNINQSHNFMQSAVYGFSAAAGFSLVMVLFAAIRERLAVADVPAPFRGSSIALITAGLMSLAFMGFTGLVKF</sequence>
<gene>
    <name evidence="1" type="primary">rnfA</name>
    <name type="ordered locus">YE1994</name>
</gene>
<keyword id="KW-0997">Cell inner membrane</keyword>
<keyword id="KW-1003">Cell membrane</keyword>
<keyword id="KW-0249">Electron transport</keyword>
<keyword id="KW-0472">Membrane</keyword>
<keyword id="KW-1278">Translocase</keyword>
<keyword id="KW-0812">Transmembrane</keyword>
<keyword id="KW-1133">Transmembrane helix</keyword>
<keyword id="KW-0813">Transport</keyword>
<evidence type="ECO:0000255" key="1">
    <source>
        <dbReference type="HAMAP-Rule" id="MF_00459"/>
    </source>
</evidence>
<accession>A1JM88</accession>
<dbReference type="EC" id="7.-.-.-" evidence="1"/>
<dbReference type="EMBL" id="AM286415">
    <property type="protein sequence ID" value="CAL12073.1"/>
    <property type="molecule type" value="Genomic_DNA"/>
</dbReference>
<dbReference type="RefSeq" id="YP_001006247.1">
    <property type="nucleotide sequence ID" value="NC_008800.1"/>
</dbReference>
<dbReference type="SMR" id="A1JM88"/>
<dbReference type="KEGG" id="yen:YE1994"/>
<dbReference type="PATRIC" id="fig|393305.7.peg.2156"/>
<dbReference type="eggNOG" id="COG4657">
    <property type="taxonomic scope" value="Bacteria"/>
</dbReference>
<dbReference type="HOGENOM" id="CLU_095255_1_0_6"/>
<dbReference type="OrthoDB" id="9803631at2"/>
<dbReference type="Proteomes" id="UP000000642">
    <property type="component" value="Chromosome"/>
</dbReference>
<dbReference type="GO" id="GO:0005886">
    <property type="term" value="C:plasma membrane"/>
    <property type="evidence" value="ECO:0007669"/>
    <property type="project" value="UniProtKB-SubCell"/>
</dbReference>
<dbReference type="GO" id="GO:0022900">
    <property type="term" value="P:electron transport chain"/>
    <property type="evidence" value="ECO:0007669"/>
    <property type="project" value="UniProtKB-UniRule"/>
</dbReference>
<dbReference type="HAMAP" id="MF_00459">
    <property type="entry name" value="RsxA_RnfA"/>
    <property type="match status" value="1"/>
</dbReference>
<dbReference type="InterPro" id="IPR011293">
    <property type="entry name" value="Ion_transpt_RnfA/RsxA"/>
</dbReference>
<dbReference type="InterPro" id="IPR003667">
    <property type="entry name" value="NqrDE/RnfAE"/>
</dbReference>
<dbReference type="InterPro" id="IPR050133">
    <property type="entry name" value="NqrDE/RnfAE_oxidrdctase"/>
</dbReference>
<dbReference type="NCBIfam" id="NF003481">
    <property type="entry name" value="PRK05151.1"/>
    <property type="match status" value="1"/>
</dbReference>
<dbReference type="NCBIfam" id="TIGR01943">
    <property type="entry name" value="rnfA"/>
    <property type="match status" value="1"/>
</dbReference>
<dbReference type="PANTHER" id="PTHR30335">
    <property type="entry name" value="INTEGRAL MEMBRANE PROTEIN OF SOXR-REDUCING COMPLEX"/>
    <property type="match status" value="1"/>
</dbReference>
<dbReference type="PANTHER" id="PTHR30335:SF0">
    <property type="entry name" value="ION-TRANSLOCATING OXIDOREDUCTASE COMPLEX SUBUNIT A"/>
    <property type="match status" value="1"/>
</dbReference>
<dbReference type="Pfam" id="PF02508">
    <property type="entry name" value="Rnf-Nqr"/>
    <property type="match status" value="1"/>
</dbReference>
<dbReference type="PIRSF" id="PIRSF006102">
    <property type="entry name" value="NQR_DE"/>
    <property type="match status" value="1"/>
</dbReference>
<proteinExistence type="inferred from homology"/>
<comment type="function">
    <text evidence="1">Part of a membrane-bound complex that couples electron transfer with translocation of ions across the membrane.</text>
</comment>
<comment type="subunit">
    <text evidence="1">The complex is composed of six subunits: RnfA, RnfB, RnfC, RnfD, RnfE and RnfG.</text>
</comment>
<comment type="subcellular location">
    <subcellularLocation>
        <location evidence="1">Cell inner membrane</location>
        <topology evidence="1">Multi-pass membrane protein</topology>
    </subcellularLocation>
</comment>
<comment type="similarity">
    <text evidence="1">Belongs to the NqrDE/RnfAE family.</text>
</comment>